<proteinExistence type="inferred from homology"/>
<name>HIS6_THEPX</name>
<comment type="function">
    <text evidence="1">IGPS catalyzes the conversion of PRFAR and glutamine to IGP, AICAR and glutamate. The HisF subunit catalyzes the cyclization activity that produces IGP and AICAR from PRFAR using the ammonia provided by the HisH subunit.</text>
</comment>
<comment type="catalytic activity">
    <reaction evidence="1">
        <text>5-[(5-phospho-1-deoxy-D-ribulos-1-ylimino)methylamino]-1-(5-phospho-beta-D-ribosyl)imidazole-4-carboxamide + L-glutamine = D-erythro-1-(imidazol-4-yl)glycerol 3-phosphate + 5-amino-1-(5-phospho-beta-D-ribosyl)imidazole-4-carboxamide + L-glutamate + H(+)</text>
        <dbReference type="Rhea" id="RHEA:24793"/>
        <dbReference type="ChEBI" id="CHEBI:15378"/>
        <dbReference type="ChEBI" id="CHEBI:29985"/>
        <dbReference type="ChEBI" id="CHEBI:58278"/>
        <dbReference type="ChEBI" id="CHEBI:58359"/>
        <dbReference type="ChEBI" id="CHEBI:58475"/>
        <dbReference type="ChEBI" id="CHEBI:58525"/>
        <dbReference type="EC" id="4.3.2.10"/>
    </reaction>
</comment>
<comment type="pathway">
    <text evidence="1">Amino-acid biosynthesis; L-histidine biosynthesis; L-histidine from 5-phospho-alpha-D-ribose 1-diphosphate: step 5/9.</text>
</comment>
<comment type="subunit">
    <text evidence="1">Heterodimer of HisH and HisF.</text>
</comment>
<comment type="subcellular location">
    <subcellularLocation>
        <location evidence="1">Cytoplasm</location>
    </subcellularLocation>
</comment>
<comment type="similarity">
    <text evidence="1">Belongs to the HisA/HisF family.</text>
</comment>
<sequence>MLAKRIIPCLDVKDGRVVKGVNFLNLKDAGDPVQIASEYNELGADELVFLDITASYEKRKIMIEVVKRTSEKVFIPLTVGGGISDLDDIKDILRAGADKVSINTQAVKQPTLIRQAAVRFGSQCVVVAIDAKRRSDGSGFDVYINGGRVNTGLDVIEWAKKVESLGAGEILLTSMDKDGTKDGYDIELTRMVSEAVNIPVIASGGAGNKEHFKEVFTEGKADAALAASVFHYRELEIKEVKRYLKEEGIPVRI</sequence>
<evidence type="ECO:0000255" key="1">
    <source>
        <dbReference type="HAMAP-Rule" id="MF_01013"/>
    </source>
</evidence>
<keyword id="KW-0028">Amino-acid biosynthesis</keyword>
<keyword id="KW-0963">Cytoplasm</keyword>
<keyword id="KW-0368">Histidine biosynthesis</keyword>
<keyword id="KW-0456">Lyase</keyword>
<dbReference type="EC" id="4.3.2.10" evidence="1"/>
<dbReference type="EMBL" id="CP000923">
    <property type="protein sequence ID" value="ABY92305.1"/>
    <property type="molecule type" value="Genomic_DNA"/>
</dbReference>
<dbReference type="RefSeq" id="WP_003866545.1">
    <property type="nucleotide sequence ID" value="NC_010320.1"/>
</dbReference>
<dbReference type="SMR" id="B0K629"/>
<dbReference type="KEGG" id="tex:Teth514_1006"/>
<dbReference type="HOGENOM" id="CLU_048577_4_0_9"/>
<dbReference type="UniPathway" id="UPA00031">
    <property type="reaction ID" value="UER00010"/>
</dbReference>
<dbReference type="Proteomes" id="UP000002155">
    <property type="component" value="Chromosome"/>
</dbReference>
<dbReference type="GO" id="GO:0005737">
    <property type="term" value="C:cytoplasm"/>
    <property type="evidence" value="ECO:0007669"/>
    <property type="project" value="UniProtKB-SubCell"/>
</dbReference>
<dbReference type="GO" id="GO:0000107">
    <property type="term" value="F:imidazoleglycerol-phosphate synthase activity"/>
    <property type="evidence" value="ECO:0007669"/>
    <property type="project" value="UniProtKB-UniRule"/>
</dbReference>
<dbReference type="GO" id="GO:0016833">
    <property type="term" value="F:oxo-acid-lyase activity"/>
    <property type="evidence" value="ECO:0007669"/>
    <property type="project" value="InterPro"/>
</dbReference>
<dbReference type="GO" id="GO:0000105">
    <property type="term" value="P:L-histidine biosynthetic process"/>
    <property type="evidence" value="ECO:0007669"/>
    <property type="project" value="UniProtKB-UniRule"/>
</dbReference>
<dbReference type="CDD" id="cd04731">
    <property type="entry name" value="HisF"/>
    <property type="match status" value="1"/>
</dbReference>
<dbReference type="FunFam" id="3.20.20.70:FF:000006">
    <property type="entry name" value="Imidazole glycerol phosphate synthase subunit HisF"/>
    <property type="match status" value="1"/>
</dbReference>
<dbReference type="Gene3D" id="3.20.20.70">
    <property type="entry name" value="Aldolase class I"/>
    <property type="match status" value="1"/>
</dbReference>
<dbReference type="HAMAP" id="MF_01013">
    <property type="entry name" value="HisF"/>
    <property type="match status" value="1"/>
</dbReference>
<dbReference type="InterPro" id="IPR013785">
    <property type="entry name" value="Aldolase_TIM"/>
</dbReference>
<dbReference type="InterPro" id="IPR020021">
    <property type="entry name" value="Glycosyl_amidation-assoc_WbuZ"/>
</dbReference>
<dbReference type="InterPro" id="IPR006062">
    <property type="entry name" value="His_biosynth"/>
</dbReference>
<dbReference type="InterPro" id="IPR004651">
    <property type="entry name" value="HisF"/>
</dbReference>
<dbReference type="InterPro" id="IPR050064">
    <property type="entry name" value="IGPS_HisA/HisF"/>
</dbReference>
<dbReference type="InterPro" id="IPR011060">
    <property type="entry name" value="RibuloseP-bd_barrel"/>
</dbReference>
<dbReference type="NCBIfam" id="TIGR00735">
    <property type="entry name" value="hisF"/>
    <property type="match status" value="1"/>
</dbReference>
<dbReference type="NCBIfam" id="TIGR03572">
    <property type="entry name" value="WbuZ"/>
    <property type="match status" value="1"/>
</dbReference>
<dbReference type="PANTHER" id="PTHR21235:SF2">
    <property type="entry name" value="IMIDAZOLE GLYCEROL PHOSPHATE SYNTHASE HISHF"/>
    <property type="match status" value="1"/>
</dbReference>
<dbReference type="PANTHER" id="PTHR21235">
    <property type="entry name" value="IMIDAZOLE GLYCEROL PHOSPHATE SYNTHASE SUBUNIT HISF/H IGP SYNTHASE SUBUNIT HISF/H"/>
    <property type="match status" value="1"/>
</dbReference>
<dbReference type="Pfam" id="PF00977">
    <property type="entry name" value="His_biosynth"/>
    <property type="match status" value="1"/>
</dbReference>
<dbReference type="SUPFAM" id="SSF51366">
    <property type="entry name" value="Ribulose-phoshate binding barrel"/>
    <property type="match status" value="1"/>
</dbReference>
<feature type="chain" id="PRO_1000135054" description="Imidazole glycerol phosphate synthase subunit HisF">
    <location>
        <begin position="1"/>
        <end position="253"/>
    </location>
</feature>
<feature type="active site" evidence="1">
    <location>
        <position position="11"/>
    </location>
</feature>
<feature type="active site" evidence="1">
    <location>
        <position position="130"/>
    </location>
</feature>
<protein>
    <recommendedName>
        <fullName evidence="1">Imidazole glycerol phosphate synthase subunit HisF</fullName>
        <ecNumber evidence="1">4.3.2.10</ecNumber>
    </recommendedName>
    <alternativeName>
        <fullName evidence="1">IGP synthase cyclase subunit</fullName>
    </alternativeName>
    <alternativeName>
        <fullName evidence="1">IGP synthase subunit HisF</fullName>
    </alternativeName>
    <alternativeName>
        <fullName evidence="1">ImGP synthase subunit HisF</fullName>
        <shortName evidence="1">IGPS subunit HisF</shortName>
    </alternativeName>
</protein>
<accession>B0K629</accession>
<gene>
    <name evidence="1" type="primary">hisF</name>
    <name type="ordered locus">Teth514_1006</name>
</gene>
<reference key="1">
    <citation type="submission" date="2008-01" db="EMBL/GenBank/DDBJ databases">
        <title>Complete sequence of Thermoanaerobacter sp. X514.</title>
        <authorList>
            <consortium name="US DOE Joint Genome Institute"/>
            <person name="Copeland A."/>
            <person name="Lucas S."/>
            <person name="Lapidus A."/>
            <person name="Barry K."/>
            <person name="Glavina del Rio T."/>
            <person name="Dalin E."/>
            <person name="Tice H."/>
            <person name="Pitluck S."/>
            <person name="Bruce D."/>
            <person name="Goodwin L."/>
            <person name="Saunders E."/>
            <person name="Brettin T."/>
            <person name="Detter J.C."/>
            <person name="Han C."/>
            <person name="Schmutz J."/>
            <person name="Larimer F."/>
            <person name="Land M."/>
            <person name="Hauser L."/>
            <person name="Kyrpides N."/>
            <person name="Kim E."/>
            <person name="Hemme C."/>
            <person name="Fields M.W."/>
            <person name="He Z."/>
            <person name="Zhou J."/>
            <person name="Richardson P."/>
        </authorList>
    </citation>
    <scope>NUCLEOTIDE SEQUENCE [LARGE SCALE GENOMIC DNA]</scope>
    <source>
        <strain>X514</strain>
    </source>
</reference>
<organism>
    <name type="scientific">Thermoanaerobacter sp. (strain X514)</name>
    <dbReference type="NCBI Taxonomy" id="399726"/>
    <lineage>
        <taxon>Bacteria</taxon>
        <taxon>Bacillati</taxon>
        <taxon>Bacillota</taxon>
        <taxon>Clostridia</taxon>
        <taxon>Thermoanaerobacterales</taxon>
        <taxon>Thermoanaerobacteraceae</taxon>
        <taxon>Thermoanaerobacter</taxon>
    </lineage>
</organism>